<name>T1SA_ECOLX</name>
<gene>
    <name evidence="5" type="primary">hsdS</name>
    <name type="synonym">hss</name>
</gene>
<dbReference type="EMBL" id="J03150">
    <property type="protein sequence ID" value="AAA23987.1"/>
    <property type="molecule type" value="Genomic_DNA"/>
</dbReference>
<dbReference type="PIR" id="A32343">
    <property type="entry name" value="NDECAS"/>
</dbReference>
<dbReference type="RefSeq" id="WP_029487515.1">
    <property type="nucleotide sequence ID" value="NZ_LVLZ01000080.1"/>
</dbReference>
<dbReference type="SMR" id="P19704"/>
<dbReference type="REBASE" id="205031">
    <property type="entry name" value="S1.Bve72ORF2738P"/>
</dbReference>
<dbReference type="REBASE" id="233081">
    <property type="entry name" value="S.Sen4024ORF3807P"/>
</dbReference>
<dbReference type="REBASE" id="3638">
    <property type="entry name" value="S.EcoAI"/>
</dbReference>
<dbReference type="REBASE" id="618857">
    <property type="entry name" value="S.LspCC1I"/>
</dbReference>
<dbReference type="eggNOG" id="COG0732">
    <property type="taxonomic scope" value="Bacteria"/>
</dbReference>
<dbReference type="PRO" id="PR:P19704"/>
<dbReference type="GO" id="GO:0003677">
    <property type="term" value="F:DNA binding"/>
    <property type="evidence" value="ECO:0007669"/>
    <property type="project" value="UniProtKB-KW"/>
</dbReference>
<dbReference type="GO" id="GO:0009307">
    <property type="term" value="P:DNA restriction-modification system"/>
    <property type="evidence" value="ECO:0007669"/>
    <property type="project" value="UniProtKB-KW"/>
</dbReference>
<dbReference type="CDD" id="cd17260">
    <property type="entry name" value="RMtype1_S_EcoEI-TRD1-CR1_like"/>
    <property type="match status" value="1"/>
</dbReference>
<dbReference type="CDD" id="cd17259">
    <property type="entry name" value="RMtype1_S_StySKI-TRD2-CR2_like"/>
    <property type="match status" value="1"/>
</dbReference>
<dbReference type="Gene3D" id="3.90.220.20">
    <property type="entry name" value="DNA methylase specificity domains"/>
    <property type="match status" value="2"/>
</dbReference>
<dbReference type="InterPro" id="IPR000055">
    <property type="entry name" value="Restrct_endonuc_typeI_TRD"/>
</dbReference>
<dbReference type="InterPro" id="IPR044946">
    <property type="entry name" value="Restrct_endonuc_typeI_TRD_sf"/>
</dbReference>
<dbReference type="InterPro" id="IPR051212">
    <property type="entry name" value="Type-I_RE_S_subunit"/>
</dbReference>
<dbReference type="PANTHER" id="PTHR43140:SF1">
    <property type="entry name" value="TYPE I RESTRICTION ENZYME ECOKI SPECIFICITY SUBUNIT"/>
    <property type="match status" value="1"/>
</dbReference>
<dbReference type="PANTHER" id="PTHR43140">
    <property type="entry name" value="TYPE-1 RESTRICTION ENZYME ECOKI SPECIFICITY PROTEIN"/>
    <property type="match status" value="1"/>
</dbReference>
<dbReference type="Pfam" id="PF01420">
    <property type="entry name" value="Methylase_S"/>
    <property type="match status" value="2"/>
</dbReference>
<dbReference type="SUPFAM" id="SSF116734">
    <property type="entry name" value="DNA methylase specificity domain"/>
    <property type="match status" value="2"/>
</dbReference>
<keyword id="KW-0238">DNA-binding</keyword>
<keyword id="KW-0680">Restriction system</keyword>
<organism>
    <name type="scientific">Escherichia coli</name>
    <dbReference type="NCBI Taxonomy" id="562"/>
    <lineage>
        <taxon>Bacteria</taxon>
        <taxon>Pseudomonadati</taxon>
        <taxon>Pseudomonadota</taxon>
        <taxon>Gammaproteobacteria</taxon>
        <taxon>Enterobacterales</taxon>
        <taxon>Enterobacteriaceae</taxon>
        <taxon>Escherichia</taxon>
    </lineage>
</organism>
<accession>P19704</accession>
<protein>
    <recommendedName>
        <fullName evidence="5">Type I restriction enzyme EcoAI specificity subunit</fullName>
        <shortName evidence="5">S protein</shortName>
    </recommendedName>
    <alternativeName>
        <fullName evidence="4">Type I specificity subunit S.EcoAI</fullName>
        <shortName evidence="4">S.EcoAI</shortName>
    </alternativeName>
    <alternativeName>
        <fullName>Type-1 restriction enzyme EcoAI specificity subunit</fullName>
    </alternativeName>
</protein>
<reference key="1">
    <citation type="journal article" date="1989" name="Cell">
        <title>Conservation of complex DNA recognition domains between families of restriction enzymes.</title>
        <authorList>
            <person name="Cowan G.M."/>
            <person name="Gann A.A.F."/>
            <person name="Murray N.E."/>
        </authorList>
    </citation>
    <scope>NUCLEOTIDE SEQUENCE [GENOMIC DNA]</scope>
    <scope>FUNCTION</scope>
    <scope>DOMAIN</scope>
    <source>
        <strain>15T</strain>
    </source>
</reference>
<reference key="2">
    <citation type="journal article" date="1984" name="EMBO J.">
        <title>The EcoA restriction and modification system of Escherichia coli 15T-: enzyme structure and DNA recognition sequence.</title>
        <authorList>
            <person name="Suri B."/>
            <person name="Shepherd J.C."/>
            <person name="Bickle T.A."/>
        </authorList>
    </citation>
    <scope>FUNCTION</scope>
    <scope>RECOGNITION SEQUENCE</scope>
    <scope>SUBUNIT</scope>
    <source>
        <strain>15T</strain>
    </source>
</reference>
<reference key="3">
    <citation type="journal article" date="2003" name="Nucleic Acids Res.">
        <title>A nomenclature for restriction enzymes, DNA methyltransferases, homing endonucleases and their genes.</title>
        <authorList>
            <person name="Roberts R.J."/>
            <person name="Belfort M."/>
            <person name="Bestor T."/>
            <person name="Bhagwat A.S."/>
            <person name="Bickle T.A."/>
            <person name="Bitinaite J."/>
            <person name="Blumenthal R.M."/>
            <person name="Degtyarev S.K."/>
            <person name="Dryden D.T."/>
            <person name="Dybvig K."/>
            <person name="Firman K."/>
            <person name="Gromova E.S."/>
            <person name="Gumport R.I."/>
            <person name="Halford S.E."/>
            <person name="Hattman S."/>
            <person name="Heitman J."/>
            <person name="Hornby D.P."/>
            <person name="Janulaitis A."/>
            <person name="Jeltsch A."/>
            <person name="Josephsen J."/>
            <person name="Kiss A."/>
            <person name="Klaenhammer T.R."/>
            <person name="Kobayashi I."/>
            <person name="Kong H."/>
            <person name="Krueger D.H."/>
            <person name="Lacks S."/>
            <person name="Marinus M.G."/>
            <person name="Miyahara M."/>
            <person name="Morgan R.D."/>
            <person name="Murray N.E."/>
            <person name="Nagaraja V."/>
            <person name="Piekarowicz A."/>
            <person name="Pingoud A."/>
            <person name="Raleigh E."/>
            <person name="Rao D.N."/>
            <person name="Reich N."/>
            <person name="Repin V.E."/>
            <person name="Selker E.U."/>
            <person name="Shaw P.C."/>
            <person name="Stein D.C."/>
            <person name="Stoddard B.L."/>
            <person name="Szybalski W."/>
            <person name="Trautner T.A."/>
            <person name="Van Etten J.L."/>
            <person name="Vitor J.M."/>
            <person name="Wilson G.G."/>
            <person name="Xu S.Y."/>
        </authorList>
    </citation>
    <scope>NOMENCLATURE</scope>
</reference>
<proteinExistence type="evidence at protein level"/>
<evidence type="ECO:0000250" key="1">
    <source>
        <dbReference type="UniProtKB" id="P05719"/>
    </source>
</evidence>
<evidence type="ECO:0000269" key="2">
    <source>
    </source>
</evidence>
<evidence type="ECO:0000269" key="3">
    <source>
    </source>
</evidence>
<evidence type="ECO:0000303" key="4">
    <source>
    </source>
</evidence>
<evidence type="ECO:0000303" key="5">
    <source>
    </source>
</evidence>
<evidence type="ECO:0000305" key="6"/>
<feature type="chain" id="PRO_0000198031" description="Type I restriction enzyme EcoAI specificity subunit">
    <location>
        <begin position="1"/>
        <end position="589"/>
    </location>
</feature>
<comment type="function">
    <text evidence="1 2 3 4">The specificity (S) subunit of a type I restriction enzyme; this subunit dictates DNA sequence specificity. The M and S subunits together form a methyltransferase (MTase) that methylates A-2 on the top strand and A-3 on the bottom strand of the sequence 5'-GAGN(7)GTCA-3'. In the presence of the R subunit the complex can also act as an endonuclease, binding to the same target sequence but cutting the DNA some distance from this site. Whether the DNA is cut or modified depends on the methylation state of the target sequence. When the target site is unmodified, the DNA is cut. When the target site is hemimethylated, the complex acts as a maintenance MTase modifying the DNA so that both strands become methylated (PubMed:12654995, PubMed:2642743, PubMed:6325176). After locating a non-methylated recognition site, the enzyme complex serves as a molecular motor that translocates DNA in an ATP-dependent manner until a collision occurs that triggers cleavage (By similarity).</text>
</comment>
<comment type="subunit">
    <text evidence="1 3">The type I restriction/modification system is composed of three polypeptides R, M and S (PubMed:6325176). The restriction enzyme has stoichiometry R(2)M(2)S(1) while the methyltransferase is M(2)S(1) (By similarity).</text>
</comment>
<comment type="domain">
    <text evidence="2">Contains two DNA recognition domains, each specifying recognition of one of the two defined components of the target sequence.</text>
</comment>
<comment type="miscellaneous">
    <text evidence="1">Type I restriction and modification enzymes are complex, multifunctional systems which require ATP, S-adenosyl methionine and Mg(2+) as cofactors and, in addition to their endonucleolytic and methylase activities, are potent DNA-dependent ATPases.</text>
</comment>
<comment type="similarity">
    <text evidence="6">Belongs to the type-I restriction system S methylase family.</text>
</comment>
<sequence length="589" mass="66693">MSVEKLIVDHMETWTSALQTRSTAGRGSSGKIDLYGIKKLRELILELAVRGKLVPQDPNDEPASELLKRIAAEKAELVKQGKIKKQKPLPEISEEEKPFELPDGWEWTTLTRIAEINPKIDVSDDEQEISFIPMPLISTKFDGSHEFEIKKWKDVKKGYTHFANGDIAIAKITPCFENSKAAIFSGLKNGIGVGTTELHVARPFSDIINRKYLLLNFKSPNFLKSGESQMTGSAGQKRVPRFFFENNPIPFPPLQEQERIIIRFTQLMSLCDQLEQQSLTSLDAHQQLVETLLGTLTDSQNVEELAENWARISEHFDTLFTTEASVDALKQTILQLAVMGKLVPQDPNDEPASELLKRIAQEKAQLVKEGKIKKQKPLPPISDEEKPFELPEGWEWCRLGSIYNFLNGYAFKSEWFTSVGLRLLRNANIAHGVTNWKDVVHIPNDMISDFENYILSENDIVISLDRPIINTGLKYAIISKSDLPCLLLQRVAKFKNYANTVSNSFLTIWLQSYFFINSIDPGRSNGVPHISTKQLEMTLFPLLPQSEQDRIISKMDELIQTCNKLKYIIKTAKQTQLHLADALTDAAIN</sequence>